<gene>
    <name type="primary">AQR1</name>
    <name type="ordered locus">YNL065W</name>
    <name type="ORF">N2417</name>
    <name type="ORF">YNL2417W</name>
</gene>
<dbReference type="EMBL" id="U12141">
    <property type="protein sequence ID" value="AAA99646.1"/>
    <property type="molecule type" value="Genomic_DNA"/>
</dbReference>
<dbReference type="EMBL" id="Z71341">
    <property type="protein sequence ID" value="CAA95938.1"/>
    <property type="molecule type" value="Genomic_DNA"/>
</dbReference>
<dbReference type="EMBL" id="AY693122">
    <property type="protein sequence ID" value="AAT93141.1"/>
    <property type="molecule type" value="Genomic_DNA"/>
</dbReference>
<dbReference type="EMBL" id="X86470">
    <property type="protein sequence ID" value="CAA60197.1"/>
    <property type="molecule type" value="Genomic_DNA"/>
</dbReference>
<dbReference type="EMBL" id="BK006947">
    <property type="protein sequence ID" value="DAA10481.1"/>
    <property type="molecule type" value="Genomic_DNA"/>
</dbReference>
<dbReference type="PIR" id="S58713">
    <property type="entry name" value="S58713"/>
</dbReference>
<dbReference type="RefSeq" id="NP_014334.3">
    <property type="nucleotide sequence ID" value="NM_001182903.3"/>
</dbReference>
<dbReference type="BioGRID" id="35758">
    <property type="interactions" value="54"/>
</dbReference>
<dbReference type="FunCoup" id="P53943">
    <property type="interactions" value="107"/>
</dbReference>
<dbReference type="IntAct" id="P53943">
    <property type="interactions" value="2"/>
</dbReference>
<dbReference type="MINT" id="P53943"/>
<dbReference type="STRING" id="4932.YNL065W"/>
<dbReference type="TCDB" id="2.A.1.2.36">
    <property type="family name" value="the major facilitator superfamily (mfs)"/>
</dbReference>
<dbReference type="GlyGen" id="P53943">
    <property type="glycosylation" value="2 sites"/>
</dbReference>
<dbReference type="iPTMnet" id="P53943"/>
<dbReference type="PaxDb" id="4932-YNL065W"/>
<dbReference type="PeptideAtlas" id="P53943"/>
<dbReference type="EnsemblFungi" id="YNL065W_mRNA">
    <property type="protein sequence ID" value="YNL065W"/>
    <property type="gene ID" value="YNL065W"/>
</dbReference>
<dbReference type="GeneID" id="855660"/>
<dbReference type="KEGG" id="sce:YNL065W"/>
<dbReference type="AGR" id="SGD:S000005009"/>
<dbReference type="SGD" id="S000005009">
    <property type="gene designation" value="AQR1"/>
</dbReference>
<dbReference type="VEuPathDB" id="FungiDB:YNL065W"/>
<dbReference type="eggNOG" id="KOG0255">
    <property type="taxonomic scope" value="Eukaryota"/>
</dbReference>
<dbReference type="GeneTree" id="ENSGT00940000176391"/>
<dbReference type="HOGENOM" id="CLU_008455_8_4_1"/>
<dbReference type="InParanoid" id="P53943"/>
<dbReference type="OMA" id="MCGFWSS"/>
<dbReference type="OrthoDB" id="440553at2759"/>
<dbReference type="BioCyc" id="YEAST:G3O-33095-MONOMER"/>
<dbReference type="BioGRID-ORCS" id="855660">
    <property type="hits" value="1 hit in 10 CRISPR screens"/>
</dbReference>
<dbReference type="PRO" id="PR:P53943"/>
<dbReference type="Proteomes" id="UP000002311">
    <property type="component" value="Chromosome XIV"/>
</dbReference>
<dbReference type="RNAct" id="P53943">
    <property type="molecule type" value="protein"/>
</dbReference>
<dbReference type="GO" id="GO:0071944">
    <property type="term" value="C:cell periphery"/>
    <property type="evidence" value="ECO:0007005"/>
    <property type="project" value="SGD"/>
</dbReference>
<dbReference type="GO" id="GO:0005737">
    <property type="term" value="C:cytoplasm"/>
    <property type="evidence" value="ECO:0007005"/>
    <property type="project" value="SGD"/>
</dbReference>
<dbReference type="GO" id="GO:0000324">
    <property type="term" value="C:fungal-type vacuole"/>
    <property type="evidence" value="ECO:0007005"/>
    <property type="project" value="SGD"/>
</dbReference>
<dbReference type="GO" id="GO:0005886">
    <property type="term" value="C:plasma membrane"/>
    <property type="evidence" value="ECO:0000314"/>
    <property type="project" value="SGD"/>
</dbReference>
<dbReference type="GO" id="GO:0008028">
    <property type="term" value="F:monocarboxylic acid transmembrane transporter activity"/>
    <property type="evidence" value="ECO:0000315"/>
    <property type="project" value="SGD"/>
</dbReference>
<dbReference type="GO" id="GO:0015565">
    <property type="term" value="F:threonine efflux transmembrane transporter activity"/>
    <property type="evidence" value="ECO:0000315"/>
    <property type="project" value="SGD"/>
</dbReference>
<dbReference type="GO" id="GO:0022857">
    <property type="term" value="F:transmembrane transporter activity"/>
    <property type="evidence" value="ECO:0000318"/>
    <property type="project" value="GO_Central"/>
</dbReference>
<dbReference type="GO" id="GO:0042910">
    <property type="term" value="F:xenobiotic transmembrane transporter activity"/>
    <property type="evidence" value="ECO:0000315"/>
    <property type="project" value="SGD"/>
</dbReference>
<dbReference type="GO" id="GO:0032973">
    <property type="term" value="P:amino acid export across plasma membrane"/>
    <property type="evidence" value="ECO:0000315"/>
    <property type="project" value="SGD"/>
</dbReference>
<dbReference type="GO" id="GO:0015718">
    <property type="term" value="P:monocarboxylic acid transport"/>
    <property type="evidence" value="ECO:0000315"/>
    <property type="project" value="SGD"/>
</dbReference>
<dbReference type="GO" id="GO:0055085">
    <property type="term" value="P:transmembrane transport"/>
    <property type="evidence" value="ECO:0000315"/>
    <property type="project" value="SGD"/>
</dbReference>
<dbReference type="CDD" id="cd17323">
    <property type="entry name" value="MFS_Tpo1_MDR_like"/>
    <property type="match status" value="1"/>
</dbReference>
<dbReference type="Gene3D" id="1.20.1250.20">
    <property type="entry name" value="MFS general substrate transporter like domains"/>
    <property type="match status" value="1"/>
</dbReference>
<dbReference type="InterPro" id="IPR011701">
    <property type="entry name" value="MFS"/>
</dbReference>
<dbReference type="InterPro" id="IPR020846">
    <property type="entry name" value="MFS_dom"/>
</dbReference>
<dbReference type="InterPro" id="IPR036259">
    <property type="entry name" value="MFS_trans_sf"/>
</dbReference>
<dbReference type="InterPro" id="IPR005829">
    <property type="entry name" value="Sugar_transporter_CS"/>
</dbReference>
<dbReference type="PANTHER" id="PTHR23502">
    <property type="entry name" value="MAJOR FACILITATOR SUPERFAMILY"/>
    <property type="match status" value="1"/>
</dbReference>
<dbReference type="PANTHER" id="PTHR23502:SF51">
    <property type="entry name" value="QUINIDINE RESISTANCE PROTEIN 1-RELATED"/>
    <property type="match status" value="1"/>
</dbReference>
<dbReference type="Pfam" id="PF07690">
    <property type="entry name" value="MFS_1"/>
    <property type="match status" value="1"/>
</dbReference>
<dbReference type="SUPFAM" id="SSF103473">
    <property type="entry name" value="MFS general substrate transporter"/>
    <property type="match status" value="1"/>
</dbReference>
<dbReference type="PROSITE" id="PS50850">
    <property type="entry name" value="MFS"/>
    <property type="match status" value="1"/>
</dbReference>
<reference key="1">
    <citation type="journal article" date="1995" name="Yeast">
        <title>The sequence of a 44 420 bp fragment located on the left arm of chromosome XIV from Saccharomyces cerevisiae.</title>
        <authorList>
            <person name="Bergez P."/>
            <person name="Doignon F."/>
            <person name="Crouzet M."/>
        </authorList>
    </citation>
    <scope>NUCLEOTIDE SEQUENCE [GENOMIC DNA]</scope>
    <source>
        <strain>S288c / FY1676</strain>
    </source>
</reference>
<reference key="2">
    <citation type="journal article" date="1996" name="Yeast">
        <authorList>
            <person name="Bergez P."/>
            <person name="Doignon F."/>
            <person name="Crouzet M."/>
        </authorList>
    </citation>
    <scope>ERRATUM OF PUBMED:8533472</scope>
</reference>
<reference key="3">
    <citation type="journal article" date="1997" name="Nature">
        <title>The nucleotide sequence of Saccharomyces cerevisiae chromosome XIV and its evolutionary implications.</title>
        <authorList>
            <person name="Philippsen P."/>
            <person name="Kleine K."/>
            <person name="Poehlmann R."/>
            <person name="Duesterhoeft A."/>
            <person name="Hamberg K."/>
            <person name="Hegemann J.H."/>
            <person name="Obermaier B."/>
            <person name="Urrestarazu L.A."/>
            <person name="Aert R."/>
            <person name="Albermann K."/>
            <person name="Altmann R."/>
            <person name="Andre B."/>
            <person name="Baladron V."/>
            <person name="Ballesta J.P.G."/>
            <person name="Becam A.-M."/>
            <person name="Beinhauer J.D."/>
            <person name="Boskovic J."/>
            <person name="Buitrago M.J."/>
            <person name="Bussereau F."/>
            <person name="Coster F."/>
            <person name="Crouzet M."/>
            <person name="D'Angelo M."/>
            <person name="Dal Pero F."/>
            <person name="De Antoni A."/>
            <person name="del Rey F."/>
            <person name="Doignon F."/>
            <person name="Domdey H."/>
            <person name="Dubois E."/>
            <person name="Fiedler T.A."/>
            <person name="Fleig U."/>
            <person name="Floeth M."/>
            <person name="Fritz C."/>
            <person name="Gaillardin C."/>
            <person name="Garcia-Cantalejo J.M."/>
            <person name="Glansdorff N."/>
            <person name="Goffeau A."/>
            <person name="Gueldener U."/>
            <person name="Herbert C.J."/>
            <person name="Heumann K."/>
            <person name="Heuss-Neitzel D."/>
            <person name="Hilbert H."/>
            <person name="Hinni K."/>
            <person name="Iraqui Houssaini I."/>
            <person name="Jacquet M."/>
            <person name="Jimenez A."/>
            <person name="Jonniaux J.-L."/>
            <person name="Karpfinger-Hartl L."/>
            <person name="Lanfranchi G."/>
            <person name="Lepingle A."/>
            <person name="Levesque H."/>
            <person name="Lyck R."/>
            <person name="Maftahi M."/>
            <person name="Mallet L."/>
            <person name="Maurer C.T.C."/>
            <person name="Messenguy F."/>
            <person name="Mewes H.-W."/>
            <person name="Moestl D."/>
            <person name="Nasr F."/>
            <person name="Nicaud J.-M."/>
            <person name="Niedenthal R.K."/>
            <person name="Pandolfo D."/>
            <person name="Pierard A."/>
            <person name="Piravandi E."/>
            <person name="Planta R.J."/>
            <person name="Pohl T.M."/>
            <person name="Purnelle B."/>
            <person name="Rebischung C."/>
            <person name="Remacha M.A."/>
            <person name="Revuelta J.L."/>
            <person name="Rinke M."/>
            <person name="Saiz J.E."/>
            <person name="Sartorello F."/>
            <person name="Scherens B."/>
            <person name="Sen-Gupta M."/>
            <person name="Soler-Mira A."/>
            <person name="Urbanus J.H.M."/>
            <person name="Valle G."/>
            <person name="Van Dyck L."/>
            <person name="Verhasselt P."/>
            <person name="Vierendeels F."/>
            <person name="Vissers S."/>
            <person name="Voet M."/>
            <person name="Volckaert G."/>
            <person name="Wach A."/>
            <person name="Wambutt R."/>
            <person name="Wedler H."/>
            <person name="Zollner A."/>
            <person name="Hani J."/>
        </authorList>
    </citation>
    <scope>NUCLEOTIDE SEQUENCE [LARGE SCALE GENOMIC DNA]</scope>
    <source>
        <strain>ATCC 204508 / S288c</strain>
    </source>
</reference>
<reference key="4">
    <citation type="journal article" date="2014" name="G3 (Bethesda)">
        <title>The reference genome sequence of Saccharomyces cerevisiae: Then and now.</title>
        <authorList>
            <person name="Engel S.R."/>
            <person name="Dietrich F.S."/>
            <person name="Fisk D.G."/>
            <person name="Binkley G."/>
            <person name="Balakrishnan R."/>
            <person name="Costanzo M.C."/>
            <person name="Dwight S.S."/>
            <person name="Hitz B.C."/>
            <person name="Karra K."/>
            <person name="Nash R.S."/>
            <person name="Weng S."/>
            <person name="Wong E.D."/>
            <person name="Lloyd P."/>
            <person name="Skrzypek M.S."/>
            <person name="Miyasato S.R."/>
            <person name="Simison M."/>
            <person name="Cherry J.M."/>
        </authorList>
    </citation>
    <scope>GENOME REANNOTATION</scope>
    <source>
        <strain>ATCC 204508 / S288c</strain>
    </source>
</reference>
<reference key="5">
    <citation type="journal article" date="2007" name="Genome Res.">
        <title>Approaching a complete repository of sequence-verified protein-encoding clones for Saccharomyces cerevisiae.</title>
        <authorList>
            <person name="Hu Y."/>
            <person name="Rolfs A."/>
            <person name="Bhullar B."/>
            <person name="Murthy T.V.S."/>
            <person name="Zhu C."/>
            <person name="Berger M.F."/>
            <person name="Camargo A.A."/>
            <person name="Kelley F."/>
            <person name="McCarron S."/>
            <person name="Jepson D."/>
            <person name="Richardson A."/>
            <person name="Raphael J."/>
            <person name="Moreira D."/>
            <person name="Taycher E."/>
            <person name="Zuo D."/>
            <person name="Mohr S."/>
            <person name="Kane M.F."/>
            <person name="Williamson J."/>
            <person name="Simpson A.J.G."/>
            <person name="Bulyk M.L."/>
            <person name="Harlow E."/>
            <person name="Marsischky G."/>
            <person name="Kolodner R.D."/>
            <person name="LaBaer J."/>
        </authorList>
    </citation>
    <scope>NUCLEOTIDE SEQUENCE [GENOMIC DNA]</scope>
    <source>
        <strain>ATCC 204508 / S288c</strain>
    </source>
</reference>
<reference key="6">
    <citation type="journal article" date="1996" name="Yeast">
        <title>Sequencing a cosmid clone of Saccharomyces cerevisiae chromosome XIV reveals 12 new open reading frames (ORFs) and an ancient duplication of six ORFs.</title>
        <authorList>
            <person name="Poehlmann R."/>
            <person name="Philippsen P."/>
        </authorList>
    </citation>
    <scope>NUCLEOTIDE SEQUENCE [GENOMIC DNA] OF 1-335</scope>
    <source>
        <strain>ATCC 96604 / S288c / FY1679</strain>
    </source>
</reference>
<reference key="7">
    <citation type="journal article" date="2002" name="Biochem. Biophys. Res. Commun.">
        <title>AQR1 gene (ORF YNL065w) encodes a plasma membrane transporter of the major facilitator superfamily that confers resistance to short-chain monocarboxylic acids and quinidine in Saccharomyces cerevisiae.</title>
        <authorList>
            <person name="Tenreiro S."/>
            <person name="Nunes P.A."/>
            <person name="Viegas C.A."/>
            <person name="Neves M.S."/>
            <person name="Teixeira M.C."/>
            <person name="Cabral M.G."/>
            <person name="Sa-Correia I."/>
        </authorList>
    </citation>
    <scope>FUNCTION</scope>
    <scope>SUBCELLULAR LOCATION</scope>
</reference>
<reference key="8">
    <citation type="journal article" date="2006" name="Proc. Natl. Acad. Sci. U.S.A.">
        <title>A global topology map of the Saccharomyces cerevisiae membrane proteome.</title>
        <authorList>
            <person name="Kim H."/>
            <person name="Melen K."/>
            <person name="Oesterberg M."/>
            <person name="von Heijne G."/>
        </authorList>
    </citation>
    <scope>TOPOLOGY [LARGE SCALE ANALYSIS]</scope>
    <source>
        <strain>ATCC 208353 / W303-1A</strain>
    </source>
</reference>
<evidence type="ECO:0000255" key="1"/>
<evidence type="ECO:0000256" key="2">
    <source>
        <dbReference type="SAM" id="MobiDB-lite"/>
    </source>
</evidence>
<evidence type="ECO:0000269" key="3">
    <source>
    </source>
</evidence>
<evidence type="ECO:0000305" key="4"/>
<organism>
    <name type="scientific">Saccharomyces cerevisiae (strain ATCC 204508 / S288c)</name>
    <name type="common">Baker's yeast</name>
    <dbReference type="NCBI Taxonomy" id="559292"/>
    <lineage>
        <taxon>Eukaryota</taxon>
        <taxon>Fungi</taxon>
        <taxon>Dikarya</taxon>
        <taxon>Ascomycota</taxon>
        <taxon>Saccharomycotina</taxon>
        <taxon>Saccharomycetes</taxon>
        <taxon>Saccharomycetales</taxon>
        <taxon>Saccharomycetaceae</taxon>
        <taxon>Saccharomyces</taxon>
    </lineage>
</organism>
<protein>
    <recommendedName>
        <fullName>Probable transporter AQR1</fullName>
    </recommendedName>
</protein>
<comment type="function">
    <text evidence="3">Probable transporter that confers resistance to short-chain monocarboxylic acids and quinidine.</text>
</comment>
<comment type="subcellular location">
    <subcellularLocation>
        <location evidence="3">Membrane</location>
        <topology evidence="3">Multi-pass membrane protein</topology>
    </subcellularLocation>
</comment>
<comment type="similarity">
    <text evidence="4">Belongs to the major facilitator superfamily. CAR1 family.</text>
</comment>
<proteinExistence type="evidence at protein level"/>
<name>AQR1_YEAST</name>
<sequence>MSRSNSIYTEDIEMYPTHNEQHLTREYTKPDGQTKSEKLNFEGAYINSHGTLSKTTTREIEGDLDSETSSHSSDDKVDPTQQITAETKAPYTLLSYGQKWGMVAILTMCGFWSSLGSPIYYPALRQLEKQFNVDENMVNVTVVVYLLFQGISPTVSGGLADCFGRRPIILAGMLIYVIASIGLACAPSYGVIIFLRCIQSIGISPTIAISSGVVGDFTLKHERGTFVGATSGFVLLGQCFGSLIGAVLTARWDWRAIFWFLTIGCGSCFLIAFLILPETKRTIAGNLSIKPKRFINRAPIFLLGPVRRRFKYDNPDYETLDPTIPKLDLSSAGKILVLPEIILSLFPSGLLFAMWTLMLSSISSGLSVAPYNYHLVIIGVCYLPGGIGGLMGSFFTGRIIDMYFKRKIKKFEQDKANGLIPQDAEINMFKVRLVCLLPQNFLAVVAYLLFGWSIDKGWRIESILITSFVCSYCAMSTLSTSTTLLVDLYPTKSSTASSCFNFVRCSLSTIFMGCFAKMKAAMTVGGTFTFLCALVFFFNFLMFIPMKYGMKWREDRLLKQQRQSWLNTLAVKAKKGTKRDQNDNHN</sequence>
<accession>P53943</accession>
<accession>D6W1B5</accession>
<accession>Q6B1F8</accession>
<keyword id="KW-0472">Membrane</keyword>
<keyword id="KW-1185">Reference proteome</keyword>
<keyword id="KW-0812">Transmembrane</keyword>
<keyword id="KW-1133">Transmembrane helix</keyword>
<keyword id="KW-0813">Transport</keyword>
<feature type="chain" id="PRO_0000173443" description="Probable transporter AQR1">
    <location>
        <begin position="1"/>
        <end position="586"/>
    </location>
</feature>
<feature type="topological domain" description="Extracellular" evidence="1">
    <location>
        <begin position="1"/>
        <end position="99"/>
    </location>
</feature>
<feature type="transmembrane region" description="Helical" evidence="1">
    <location>
        <begin position="100"/>
        <end position="120"/>
    </location>
</feature>
<feature type="topological domain" description="Cytoplasmic" evidence="1">
    <location>
        <begin position="121"/>
        <end position="139"/>
    </location>
</feature>
<feature type="transmembrane region" description="Helical" evidence="1">
    <location>
        <begin position="140"/>
        <end position="160"/>
    </location>
</feature>
<feature type="topological domain" description="Extracellular" evidence="1">
    <location>
        <begin position="161"/>
        <end position="166"/>
    </location>
</feature>
<feature type="transmembrane region" description="Helical" evidence="1">
    <location>
        <begin position="167"/>
        <end position="187"/>
    </location>
</feature>
<feature type="topological domain" description="Cytoplasmic" evidence="1">
    <location>
        <position position="188"/>
    </location>
</feature>
<feature type="transmembrane region" description="Helical" evidence="1">
    <location>
        <begin position="189"/>
        <end position="209"/>
    </location>
</feature>
<feature type="topological domain" description="Extracellular" evidence="1">
    <location>
        <begin position="210"/>
        <end position="225"/>
    </location>
</feature>
<feature type="transmembrane region" description="Helical" evidence="1">
    <location>
        <begin position="226"/>
        <end position="246"/>
    </location>
</feature>
<feature type="topological domain" description="Cytoplasmic" evidence="1">
    <location>
        <begin position="247"/>
        <end position="255"/>
    </location>
</feature>
<feature type="transmembrane region" description="Helical" evidence="1">
    <location>
        <begin position="256"/>
        <end position="276"/>
    </location>
</feature>
<feature type="topological domain" description="Extracellular" evidence="1">
    <location>
        <begin position="277"/>
        <end position="334"/>
    </location>
</feature>
<feature type="transmembrane region" description="Helical" evidence="1">
    <location>
        <begin position="335"/>
        <end position="355"/>
    </location>
</feature>
<feature type="topological domain" description="Cytoplasmic" evidence="1">
    <location>
        <begin position="356"/>
        <end position="374"/>
    </location>
</feature>
<feature type="transmembrane region" description="Helical" evidence="1">
    <location>
        <begin position="375"/>
        <end position="395"/>
    </location>
</feature>
<feature type="topological domain" description="Extracellular" evidence="1">
    <location>
        <begin position="396"/>
        <end position="433"/>
    </location>
</feature>
<feature type="transmembrane region" description="Helical" evidence="1">
    <location>
        <begin position="434"/>
        <end position="454"/>
    </location>
</feature>
<feature type="topological domain" description="Cytoplasmic" evidence="1">
    <location>
        <begin position="455"/>
        <end position="459"/>
    </location>
</feature>
<feature type="transmembrane region" description="Helical" evidence="1">
    <location>
        <begin position="460"/>
        <end position="480"/>
    </location>
</feature>
<feature type="topological domain" description="Extracellular" evidence="1">
    <location>
        <begin position="481"/>
        <end position="523"/>
    </location>
</feature>
<feature type="transmembrane region" description="Helical" evidence="1">
    <location>
        <begin position="524"/>
        <end position="544"/>
    </location>
</feature>
<feature type="topological domain" description="Cytoplasmic" evidence="1">
    <location>
        <begin position="545"/>
        <end position="586"/>
    </location>
</feature>
<feature type="region of interest" description="Disordered" evidence="2">
    <location>
        <begin position="1"/>
        <end position="44"/>
    </location>
</feature>
<feature type="region of interest" description="Disordered" evidence="2">
    <location>
        <begin position="61"/>
        <end position="82"/>
    </location>
</feature>
<feature type="compositionally biased region" description="Basic and acidic residues" evidence="2">
    <location>
        <begin position="19"/>
        <end position="40"/>
    </location>
</feature>
<feature type="sequence conflict" description="In Ref. 5; AAT93141." evidence="4" ref="5">
    <original>L</original>
    <variation>P</variation>
    <location>
        <position position="174"/>
    </location>
</feature>